<reference key="1">
    <citation type="journal article" date="1992" name="Proc. Natl. Acad. Sci. U.S.A.">
        <title>Global control in Pseudomonas fluorescens mediating antibiotic synthesis and suppression of black root rot of tobacco.</title>
        <authorList>
            <person name="Laville J."/>
            <person name="Voisard C.P."/>
            <person name="Keel C."/>
            <person name="Maurhofer M."/>
            <person name="Difago G."/>
            <person name="Haas D."/>
        </authorList>
    </citation>
    <scope>NUCLEOTIDE SEQUENCE [GENOMIC DNA]</scope>
    <scope>FUNCTION</scope>
    <scope>INDUCTION</scope>
    <scope>DISRUPTION PHENOTYPE</scope>
    <source>
        <strain>DSM 19095 / LMG 27888 / CFBP 6595 / CHA0</strain>
    </source>
</reference>
<reference key="2">
    <citation type="journal article" date="1994" name="Mol. Plant Microbe Interact.">
        <title>Global regulation of expression of antifungal factors by a Pseudomonas fluorescens biological control strain.</title>
        <authorList>
            <person name="Gaffney T.D."/>
            <person name="Lam S.T."/>
            <person name="Ligon J."/>
            <person name="Gates K."/>
            <person name="Frazelle A."/>
            <person name="Maio J."/>
            <person name="Hill S."/>
            <person name="Goodwin S."/>
            <person name="Torkewitz N."/>
            <person name="Allshouse A.M."/>
            <person name="Kempf H.J."/>
            <person name="Becker J.O."/>
        </authorList>
    </citation>
    <scope>NUCLEOTIDE SEQUENCE [GENOMIC DNA]</scope>
    <source>
        <strain>BL915</strain>
    </source>
</reference>
<reference key="3">
    <citation type="journal article" date="1999" name="Proc. Natl. Acad. Sci. U.S.A.">
        <title>Global GacA-steered control of cyanide and exoprotease production in Pseudomonas fluorescens involves specific ribosome binding sites.</title>
        <authorList>
            <person name="Blumer C."/>
            <person name="Heeb S."/>
            <person name="Pessi G."/>
            <person name="Haas D."/>
        </authorList>
    </citation>
    <scope>FUNCTION</scope>
    <scope>DISRUPTION PHENOTYPE</scope>
    <source>
        <strain>DSM 19095 / LMG 27888 / CFBP 6595 / CHA0</strain>
    </source>
</reference>
<reference key="4">
    <citation type="journal article" date="2002" name="J. Bacteriol.">
        <title>Regulatory RNA as mediator in GacA/RsmA-dependent global control of exoproduct formation in Pseudomonas fluorescens CHA0.</title>
        <authorList>
            <person name="Heeb S."/>
            <person name="Blumer C."/>
            <person name="Haas D."/>
        </authorList>
    </citation>
    <scope>FUNCTION</scope>
    <scope>DISRUPTION PHENOTYPE</scope>
    <source>
        <strain>DSM 19095 / LMG 27888 / CFBP 6595 / CHA0</strain>
    </source>
</reference>
<reference key="5">
    <citation type="journal article" date="2003" name="Mol. Microbiol.">
        <title>RsmY, a small regulatory RNA, is required in concert with RsmZ for GacA-dependent expression of biocontrol traits in Pseudomonas fluorescens CHA0.</title>
        <authorList>
            <person name="Valverde C."/>
            <person name="Heeb S."/>
            <person name="Keel C."/>
            <person name="Haas D."/>
        </authorList>
    </citation>
    <scope>FUNCTION</scope>
    <scope>DISRUPTION PHENOTYPE</scope>
    <source>
        <strain>DSM 19095 / LMG 27888 / CFBP 6595 / CHA0</strain>
    </source>
</reference>
<reference key="6">
    <citation type="journal article" date="2005" name="J. Bacteriol.">
        <title>Posttranscriptional repression of GacS/GacA-controlled genes by the RNA-binding protein RsmE acting together with RsmA in the biocontrol strain Pseudomonas fluorescens CHA0.</title>
        <authorList>
            <person name="Reimmann C."/>
            <person name="Valverde C."/>
            <person name="Kay E."/>
            <person name="Haas D."/>
        </authorList>
    </citation>
    <scope>FUNCTION</scope>
    <scope>DISRUPTION PHENOTYPE</scope>
    <source>
        <strain>DSM 19095 / LMG 27888 / CFBP 6595 / CHA0</strain>
    </source>
</reference>
<reference key="7">
    <citation type="journal article" date="2005" name="Proc. Natl. Acad. Sci. U.S.A.">
        <title>Three small RNAs jointly ensure secondary metabolism and biocontrol in Pseudomonas fluorescens CHA0.</title>
        <authorList>
            <person name="Kay E."/>
            <person name="Dubuis C."/>
            <person name="Haas D."/>
        </authorList>
    </citation>
    <scope>FUNCTION</scope>
    <scope>DISRUPTION PHENOTYPE</scope>
    <source>
        <strain>DSM 19095 / LMG 27888 / CFBP 6595 / CHA0</strain>
    </source>
</reference>
<reference key="8">
    <citation type="journal article" date="2013" name="RNA Biol.">
        <title>RNA pentaloop structures as effective targets of regulators belonging to the RsmA/CsrA protein family.</title>
        <authorList>
            <person name="Lapouge K."/>
            <person name="Perozzo R."/>
            <person name="Iwaszkiewicz J."/>
            <person name="Bertelli C."/>
            <person name="Zoete V."/>
            <person name="Michielin O."/>
            <person name="Scapozza L."/>
            <person name="Haas D."/>
        </authorList>
    </citation>
    <scope>FUNCTION</scope>
    <scope>DISRUPTION PHENOTYPE</scope>
</reference>
<accession>P32967</accession>
<gene>
    <name evidence="10" type="primary">gacA</name>
</gene>
<feature type="chain" id="PRO_0000081288" description="Response regulator GacA">
    <location>
        <begin position="1"/>
        <end position="213"/>
    </location>
</feature>
<feature type="domain" description="Response regulatory" evidence="1">
    <location>
        <begin position="3"/>
        <end position="119"/>
    </location>
</feature>
<feature type="domain" description="HTH luxR-type" evidence="2">
    <location>
        <begin position="142"/>
        <end position="207"/>
    </location>
</feature>
<feature type="DNA-binding region" description="H-T-H motif" evidence="2">
    <location>
        <begin position="166"/>
        <end position="185"/>
    </location>
</feature>
<feature type="modified residue" description="4-aspartylphosphate" evidence="1">
    <location>
        <position position="54"/>
    </location>
</feature>
<feature type="sequence variant" description="In the spontaneous pleiotropic mutant BL915-1.">
    <original>P</original>
    <variation>L</variation>
    <location>
        <position position="90"/>
    </location>
</feature>
<feature type="sequence variant" description="In the spontaneous pleiotropic mutant BL915-2.">
    <original>T</original>
    <variation>I</variation>
    <location>
        <position position="182"/>
    </location>
</feature>
<feature type="sequence conflict" description="In Ref. 2; AAA98759." evidence="11" ref="2">
    <original>Y</original>
    <variation>D</variation>
    <location>
        <position position="49"/>
    </location>
</feature>
<feature type="sequence conflict" description="In Ref. 2; AAA98759." evidence="11" ref="2">
    <original>L</original>
    <variation>A</variation>
    <location>
        <position position="213"/>
    </location>
</feature>
<protein>
    <recommendedName>
        <fullName>Response regulator GacA</fullName>
    </recommendedName>
    <alternativeName>
        <fullName>Global activator</fullName>
    </alternativeName>
    <alternativeName>
        <fullName evidence="10">Global antibiotic and cyanide control protein</fullName>
    </alternativeName>
</protein>
<comment type="function">
    <text evidence="3 4 5 6 7 8 9">Member of the two-component regulatory system GacA/GacS which controls the expression of secondary metabolites and extracellular products. Acts (probably primarily) by activating expression of CsrA1 and CsrA2 antagonist small RNAs (sRNA) RsmX, RsmY and RsmZ which bind to and prevent translation repression by CsrA1 and CsrA2 (PubMed:11807065, PubMed:14622422, PubMed:15601712, PubMed:16286659). Involved in the regulation of secondary metabolism and in the synthesis of the antifungal factors cyanide, 2,4-diacetylphloroglucinol and pyoluteorin (PubMed:1311842). Involved in synthesis of the autoinducing signal (unrelated to N-acylhomoserine lactones, induces the Gac/Csr cascade) (PubMed:16286659). Exercises positive post-transcriptional control over the hcnABC and aprA genes; acts upstream of CsrA2 (rsmA) (PubMed:10570200). Controls expression of csrA1 (rsmE) and csrA2 (PubMed:15601712).</text>
</comment>
<comment type="induction">
    <text evidence="5">Increases 2-fold from exponential to stationary phase (at protein level).</text>
</comment>
<comment type="PTM">
    <text evidence="11">Phosphorylated by GacS (Probable).</text>
</comment>
<comment type="disruption phenotype">
    <text evidence="3 4 5 6 7 8 9">No longer produces the secondary metabolites diacetylphloroglucinol (Phl) or pyoluteorin (2 antifungals) or HCN (PubMed:1311842). No longer protects tobacco plants from attack by the black root rot-causing fungus Thielaviopsis basicola (PubMed:1311842). 50-fold decrease in expression of hcnA (PubMed:10570200). Greatly decreased expression of genes controlled by this two-component system such as aprA, hcnA, phlA and pltA (PubMed:10570200, PubMed:11807065, PubMed:14622422, PubMed:15601712, PubMed:23635605). Loss of expression of small RNAs (sRNA) RsmX, RsmY and RsmZ (PubMed:14622422, PubMed:16286659). Loss of the autoinducing signal (which is unrelated to N-acylhomoserine lactones and induces the Gac/Csr cascade) (PubMed:16286659). Its deletion is suppressed by overexpression of sRNAs RsmZ, RsmY or by RsmX (PubMed:11807065, PubMed:14622422, PubMed:16286659). Decreased expression of translational regulators CsrA1 (rsmE) and CsrA2 (rsmA) (PubMed:15601712).</text>
</comment>
<sequence>MIRVLVVDDHDLVRTGITRMLADIDGLQVVGQAESGEESLLKARELKPYVVLMDVKMPGIGGLEATRKLLRSHPDIKVVAVTVCEEDPFPTRLLQAGAAGYLTKGAGLNEMVQAIRLVFAGQRYISPQIAQQLVFKSFQPSSDSPFDALSEREIQIALMIVGCQKVQIISDKLCLSPKTVNTYRYRIFEKLSISSDVELTLLAVRHGMVDASL</sequence>
<organism>
    <name type="scientific">Pseudomonas protegens (strain DSM 19095 / LMG 27888 / CFBP 6595 / CHA0)</name>
    <dbReference type="NCBI Taxonomy" id="1124983"/>
    <lineage>
        <taxon>Bacteria</taxon>
        <taxon>Pseudomonadati</taxon>
        <taxon>Pseudomonadota</taxon>
        <taxon>Gammaproteobacteria</taxon>
        <taxon>Pseudomonadales</taxon>
        <taxon>Pseudomonadaceae</taxon>
        <taxon>Pseudomonas</taxon>
    </lineage>
</organism>
<name>GACA_PSEPH</name>
<keyword id="KW-0010">Activator</keyword>
<keyword id="KW-0238">DNA-binding</keyword>
<keyword id="KW-0597">Phosphoprotein</keyword>
<keyword id="KW-0804">Transcription</keyword>
<keyword id="KW-0805">Transcription regulation</keyword>
<keyword id="KW-0902">Two-component regulatory system</keyword>
<proteinExistence type="evidence at protein level"/>
<dbReference type="EMBL" id="M80913">
    <property type="protein sequence ID" value="AAA25821.1"/>
    <property type="molecule type" value="Genomic_DNA"/>
</dbReference>
<dbReference type="EMBL" id="L29642">
    <property type="protein sequence ID" value="AAA98759.1"/>
    <property type="molecule type" value="Genomic_DNA"/>
</dbReference>
<dbReference type="SMR" id="P32967"/>
<dbReference type="eggNOG" id="COG2197">
    <property type="taxonomic scope" value="Bacteria"/>
</dbReference>
<dbReference type="GO" id="GO:0003677">
    <property type="term" value="F:DNA binding"/>
    <property type="evidence" value="ECO:0007669"/>
    <property type="project" value="UniProtKB-KW"/>
</dbReference>
<dbReference type="GO" id="GO:0000160">
    <property type="term" value="P:phosphorelay signal transduction system"/>
    <property type="evidence" value="ECO:0007669"/>
    <property type="project" value="UniProtKB-KW"/>
</dbReference>
<dbReference type="GO" id="GO:0006355">
    <property type="term" value="P:regulation of DNA-templated transcription"/>
    <property type="evidence" value="ECO:0007669"/>
    <property type="project" value="InterPro"/>
</dbReference>
<dbReference type="CDD" id="cd06170">
    <property type="entry name" value="LuxR_C_like"/>
    <property type="match status" value="1"/>
</dbReference>
<dbReference type="CDD" id="cd17535">
    <property type="entry name" value="REC_NarL-like"/>
    <property type="match status" value="1"/>
</dbReference>
<dbReference type="FunFam" id="3.40.50.2300:FF:000015">
    <property type="entry name" value="Two-component response regulator UvrY"/>
    <property type="match status" value="1"/>
</dbReference>
<dbReference type="Gene3D" id="3.40.50.2300">
    <property type="match status" value="1"/>
</dbReference>
<dbReference type="InterPro" id="IPR011006">
    <property type="entry name" value="CheY-like_superfamily"/>
</dbReference>
<dbReference type="InterPro" id="IPR016032">
    <property type="entry name" value="Sig_transdc_resp-reg_C-effctor"/>
</dbReference>
<dbReference type="InterPro" id="IPR001789">
    <property type="entry name" value="Sig_transdc_resp-reg_receiver"/>
</dbReference>
<dbReference type="InterPro" id="IPR000792">
    <property type="entry name" value="Tscrpt_reg_LuxR_C"/>
</dbReference>
<dbReference type="InterPro" id="IPR039420">
    <property type="entry name" value="WalR-like"/>
</dbReference>
<dbReference type="NCBIfam" id="NF007018">
    <property type="entry name" value="PRK09483.1"/>
    <property type="match status" value="1"/>
</dbReference>
<dbReference type="PANTHER" id="PTHR43214:SF3">
    <property type="entry name" value="RESPONSE REGULATOR UVRY"/>
    <property type="match status" value="1"/>
</dbReference>
<dbReference type="PANTHER" id="PTHR43214">
    <property type="entry name" value="TWO-COMPONENT RESPONSE REGULATOR"/>
    <property type="match status" value="1"/>
</dbReference>
<dbReference type="Pfam" id="PF00196">
    <property type="entry name" value="GerE"/>
    <property type="match status" value="1"/>
</dbReference>
<dbReference type="Pfam" id="PF00072">
    <property type="entry name" value="Response_reg"/>
    <property type="match status" value="1"/>
</dbReference>
<dbReference type="SMART" id="SM00421">
    <property type="entry name" value="HTH_LUXR"/>
    <property type="match status" value="1"/>
</dbReference>
<dbReference type="SMART" id="SM00448">
    <property type="entry name" value="REC"/>
    <property type="match status" value="1"/>
</dbReference>
<dbReference type="SUPFAM" id="SSF46894">
    <property type="entry name" value="C-terminal effector domain of the bipartite response regulators"/>
    <property type="match status" value="1"/>
</dbReference>
<dbReference type="SUPFAM" id="SSF52172">
    <property type="entry name" value="CheY-like"/>
    <property type="match status" value="1"/>
</dbReference>
<dbReference type="PROSITE" id="PS00622">
    <property type="entry name" value="HTH_LUXR_1"/>
    <property type="match status" value="1"/>
</dbReference>
<dbReference type="PROSITE" id="PS50043">
    <property type="entry name" value="HTH_LUXR_2"/>
    <property type="match status" value="1"/>
</dbReference>
<dbReference type="PROSITE" id="PS50110">
    <property type="entry name" value="RESPONSE_REGULATORY"/>
    <property type="match status" value="1"/>
</dbReference>
<evidence type="ECO:0000255" key="1">
    <source>
        <dbReference type="PROSITE-ProRule" id="PRU00169"/>
    </source>
</evidence>
<evidence type="ECO:0000255" key="2">
    <source>
        <dbReference type="PROSITE-ProRule" id="PRU00411"/>
    </source>
</evidence>
<evidence type="ECO:0000269" key="3">
    <source>
    </source>
</evidence>
<evidence type="ECO:0000269" key="4">
    <source>
    </source>
</evidence>
<evidence type="ECO:0000269" key="5">
    <source>
    </source>
</evidence>
<evidence type="ECO:0000269" key="6">
    <source>
    </source>
</evidence>
<evidence type="ECO:0000269" key="7">
    <source>
    </source>
</evidence>
<evidence type="ECO:0000269" key="8">
    <source>
    </source>
</evidence>
<evidence type="ECO:0000269" key="9">
    <source>
    </source>
</evidence>
<evidence type="ECO:0000303" key="10">
    <source>
    </source>
</evidence>
<evidence type="ECO:0000305" key="11"/>